<comment type="catalytic activity">
    <reaction evidence="1">
        <text>5-amino-1-(5-phospho-D-ribosyl)imidazole-4-carboxylate + L-aspartate + ATP = (2S)-2-[5-amino-1-(5-phospho-beta-D-ribosyl)imidazole-4-carboxamido]succinate + ADP + phosphate + 2 H(+)</text>
        <dbReference type="Rhea" id="RHEA:22628"/>
        <dbReference type="ChEBI" id="CHEBI:15378"/>
        <dbReference type="ChEBI" id="CHEBI:29991"/>
        <dbReference type="ChEBI" id="CHEBI:30616"/>
        <dbReference type="ChEBI" id="CHEBI:43474"/>
        <dbReference type="ChEBI" id="CHEBI:58443"/>
        <dbReference type="ChEBI" id="CHEBI:77657"/>
        <dbReference type="ChEBI" id="CHEBI:456216"/>
        <dbReference type="EC" id="6.3.2.6"/>
    </reaction>
</comment>
<comment type="pathway">
    <text evidence="1">Purine metabolism; IMP biosynthesis via de novo pathway; 5-amino-1-(5-phospho-D-ribosyl)imidazole-4-carboxamide from 5-amino-1-(5-phospho-D-ribosyl)imidazole-4-carboxylate: step 1/2.</text>
</comment>
<comment type="similarity">
    <text evidence="1">Belongs to the SAICAR synthetase family.</text>
</comment>
<protein>
    <recommendedName>
        <fullName evidence="1">Phosphoribosylaminoimidazole-succinocarboxamide synthase</fullName>
        <ecNumber evidence="1">6.3.2.6</ecNumber>
    </recommendedName>
    <alternativeName>
        <fullName evidence="1">SAICAR synthetase</fullName>
    </alternativeName>
</protein>
<feature type="chain" id="PRO_1000018703" description="Phosphoribosylaminoimidazole-succinocarboxamide synthase">
    <location>
        <begin position="1"/>
        <end position="237"/>
    </location>
</feature>
<accession>A7ML04</accession>
<name>PUR7_CROS8</name>
<reference key="1">
    <citation type="journal article" date="2010" name="PLoS ONE">
        <title>Genome sequence of Cronobacter sakazakii BAA-894 and comparative genomic hybridization analysis with other Cronobacter species.</title>
        <authorList>
            <person name="Kucerova E."/>
            <person name="Clifton S.W."/>
            <person name="Xia X.Q."/>
            <person name="Long F."/>
            <person name="Porwollik S."/>
            <person name="Fulton L."/>
            <person name="Fronick C."/>
            <person name="Minx P."/>
            <person name="Kyung K."/>
            <person name="Warren W."/>
            <person name="Fulton R."/>
            <person name="Feng D."/>
            <person name="Wollam A."/>
            <person name="Shah N."/>
            <person name="Bhonagiri V."/>
            <person name="Nash W.E."/>
            <person name="Hallsworth-Pepin K."/>
            <person name="Wilson R.K."/>
            <person name="McClelland M."/>
            <person name="Forsythe S.J."/>
        </authorList>
    </citation>
    <scope>NUCLEOTIDE SEQUENCE [LARGE SCALE GENOMIC DNA]</scope>
    <source>
        <strain>ATCC BAA-894</strain>
    </source>
</reference>
<evidence type="ECO:0000255" key="1">
    <source>
        <dbReference type="HAMAP-Rule" id="MF_00137"/>
    </source>
</evidence>
<sequence length="237" mass="26994">MQKQAELYRGKAKTVYSTENPDLLVLEFRNDTSAGDGARIEQFDRKGMVNNKFNYFIMSKLAEAGIPTQMERLLSDTEALVKKLDMVPVECVIRNRAAGSLVKRLGIEEGIELNPPLFDLFLKNDAMHDPMVNESYCETFGWVSQENLARMKELTYKANDVLKKLFDDAGLILVDFKLEFGLFKGEVTLGDEFSPDGARLWDKQTMDKMDKDRFRQSLGGLIEAYEEVARRLGVNLD</sequence>
<proteinExistence type="inferred from homology"/>
<dbReference type="EC" id="6.3.2.6" evidence="1"/>
<dbReference type="EMBL" id="CP000783">
    <property type="protein sequence ID" value="ABU76050.1"/>
    <property type="molecule type" value="Genomic_DNA"/>
</dbReference>
<dbReference type="RefSeq" id="WP_004387002.1">
    <property type="nucleotide sequence ID" value="NC_009778.1"/>
</dbReference>
<dbReference type="SMR" id="A7ML04"/>
<dbReference type="KEGG" id="esa:ESA_00773"/>
<dbReference type="HOGENOM" id="CLU_061495_2_0_6"/>
<dbReference type="UniPathway" id="UPA00074">
    <property type="reaction ID" value="UER00131"/>
</dbReference>
<dbReference type="Proteomes" id="UP000000260">
    <property type="component" value="Chromosome"/>
</dbReference>
<dbReference type="GO" id="GO:0005829">
    <property type="term" value="C:cytosol"/>
    <property type="evidence" value="ECO:0007669"/>
    <property type="project" value="TreeGrafter"/>
</dbReference>
<dbReference type="GO" id="GO:0005524">
    <property type="term" value="F:ATP binding"/>
    <property type="evidence" value="ECO:0007669"/>
    <property type="project" value="UniProtKB-KW"/>
</dbReference>
<dbReference type="GO" id="GO:0004639">
    <property type="term" value="F:phosphoribosylaminoimidazolesuccinocarboxamide synthase activity"/>
    <property type="evidence" value="ECO:0007669"/>
    <property type="project" value="UniProtKB-UniRule"/>
</dbReference>
<dbReference type="GO" id="GO:0006189">
    <property type="term" value="P:'de novo' IMP biosynthetic process"/>
    <property type="evidence" value="ECO:0007669"/>
    <property type="project" value="UniProtKB-UniRule"/>
</dbReference>
<dbReference type="GO" id="GO:0009236">
    <property type="term" value="P:cobalamin biosynthetic process"/>
    <property type="evidence" value="ECO:0007669"/>
    <property type="project" value="InterPro"/>
</dbReference>
<dbReference type="CDD" id="cd01415">
    <property type="entry name" value="SAICAR_synt_PurC"/>
    <property type="match status" value="1"/>
</dbReference>
<dbReference type="FunFam" id="3.30.200.20:FF:000086">
    <property type="entry name" value="Phosphoribosylaminoimidazole-succinocarboxamide synthase"/>
    <property type="match status" value="1"/>
</dbReference>
<dbReference type="FunFam" id="3.30.470.20:FF:000006">
    <property type="entry name" value="Phosphoribosylaminoimidazole-succinocarboxamide synthase"/>
    <property type="match status" value="1"/>
</dbReference>
<dbReference type="Gene3D" id="3.30.470.20">
    <property type="entry name" value="ATP-grasp fold, B domain"/>
    <property type="match status" value="1"/>
</dbReference>
<dbReference type="Gene3D" id="3.30.200.20">
    <property type="entry name" value="Phosphorylase Kinase, domain 1"/>
    <property type="match status" value="1"/>
</dbReference>
<dbReference type="HAMAP" id="MF_00137">
    <property type="entry name" value="SAICAR_synth"/>
    <property type="match status" value="1"/>
</dbReference>
<dbReference type="InterPro" id="IPR028923">
    <property type="entry name" value="SAICAR_synt/ADE2_N"/>
</dbReference>
<dbReference type="InterPro" id="IPR033934">
    <property type="entry name" value="SAICAR_synt_PurC"/>
</dbReference>
<dbReference type="InterPro" id="IPR001636">
    <property type="entry name" value="SAICAR_synth"/>
</dbReference>
<dbReference type="InterPro" id="IPR050089">
    <property type="entry name" value="SAICAR_synthetase"/>
</dbReference>
<dbReference type="InterPro" id="IPR018236">
    <property type="entry name" value="SAICAR_synthetase_CS"/>
</dbReference>
<dbReference type="NCBIfam" id="TIGR00081">
    <property type="entry name" value="purC"/>
    <property type="match status" value="1"/>
</dbReference>
<dbReference type="PANTHER" id="PTHR43599">
    <property type="entry name" value="MULTIFUNCTIONAL PROTEIN ADE2"/>
    <property type="match status" value="1"/>
</dbReference>
<dbReference type="PANTHER" id="PTHR43599:SF3">
    <property type="entry name" value="SI:DKEY-6E2.2"/>
    <property type="match status" value="1"/>
</dbReference>
<dbReference type="Pfam" id="PF01259">
    <property type="entry name" value="SAICAR_synt"/>
    <property type="match status" value="1"/>
</dbReference>
<dbReference type="SUPFAM" id="SSF56104">
    <property type="entry name" value="SAICAR synthase-like"/>
    <property type="match status" value="1"/>
</dbReference>
<dbReference type="PROSITE" id="PS01057">
    <property type="entry name" value="SAICAR_SYNTHETASE_1"/>
    <property type="match status" value="1"/>
</dbReference>
<dbReference type="PROSITE" id="PS01058">
    <property type="entry name" value="SAICAR_SYNTHETASE_2"/>
    <property type="match status" value="1"/>
</dbReference>
<organism>
    <name type="scientific">Cronobacter sakazakii (strain ATCC BAA-894)</name>
    <name type="common">Enterobacter sakazakii</name>
    <dbReference type="NCBI Taxonomy" id="290339"/>
    <lineage>
        <taxon>Bacteria</taxon>
        <taxon>Pseudomonadati</taxon>
        <taxon>Pseudomonadota</taxon>
        <taxon>Gammaproteobacteria</taxon>
        <taxon>Enterobacterales</taxon>
        <taxon>Enterobacteriaceae</taxon>
        <taxon>Cronobacter</taxon>
    </lineage>
</organism>
<gene>
    <name evidence="1" type="primary">purC</name>
    <name type="ordered locus">ESA_00773</name>
</gene>
<keyword id="KW-0067">ATP-binding</keyword>
<keyword id="KW-0436">Ligase</keyword>
<keyword id="KW-0547">Nucleotide-binding</keyword>
<keyword id="KW-0658">Purine biosynthesis</keyword>
<keyword id="KW-1185">Reference proteome</keyword>